<sequence>MLYKGDTLYLNWLEDGIAELVFDAPGSVNKLDTATVASLGHALDVLEKQHDLKALLLRSEKAAFIVGADITEFLSLFQVPAEQLSQWLHFANSVFNRLEDLPVPTLCAINGYALGGGCECVLATDFRLATPDARIGLPETKLGIMPGFGGSVRLPRLLGADSALEIIAAGKDITADAALKVGLVDAVVKPEKLIEGALRMLRQAIDGELDWQARRQPKLEPLRLSKIEATMSFTIAKGMVMQTAGKHYPAPMTAVKTIEAAAGLGRDEALALENKSFVPLARSSEARALVGIFLNDQYVKGLAKKLTKETETPKQAAVLGAGIMGGGIAYQSAWKGVPVIMKDINEKSLTLGISEASKLLNKQLERGKIDGLKLAGVIATIHPTLDYAGFERADVVVEAVVENPKVKKAVLAETEEKVRPDTVIASNTSTIPISELASVLKRPENFCGMHFFNPVHRMPLVEVIRGEKTSDATIAKVVSWASKMGKTPIVVNDCPGFFVNRVLFPYFAGFSQLLRDGADFRQIDKVMEKQFGWPMGPAYLLDVVGIDTAHHAQAVMAAGFPQRMQKDYRDAIDALFDAGRFGQKNGKGFYAYQEDSKGKPRKVPDDAVDSLLAEVSQPKRAFSDEEIVARMMIPMVNEVVRCLEEGIIASPAEADMALVYGLGFPPFHGGAFRWLDTQGSAKYLDMAQHYQHLGPLYEAPAGLRDKASHNAPYYPQVEPAQPVGELQTA</sequence>
<name>FADB_CROS8</name>
<feature type="chain" id="PRO_1000069563" description="Fatty acid oxidation complex subunit alpha">
    <location>
        <begin position="1"/>
        <end position="729"/>
    </location>
</feature>
<feature type="region of interest" description="Enoyl-CoA hydratase/isomerase" evidence="1">
    <location>
        <begin position="1"/>
        <end position="189"/>
    </location>
</feature>
<feature type="region of interest" description="3-hydroxyacyl-CoA dehydrogenase" evidence="1">
    <location>
        <begin position="311"/>
        <end position="729"/>
    </location>
</feature>
<feature type="region of interest" description="Disordered" evidence="2">
    <location>
        <begin position="708"/>
        <end position="729"/>
    </location>
</feature>
<feature type="active site" description="For 3-hydroxyacyl-CoA dehydrogenase activity" evidence="1">
    <location>
        <position position="450"/>
    </location>
</feature>
<feature type="binding site" evidence="1">
    <location>
        <position position="296"/>
    </location>
    <ligand>
        <name>substrate</name>
    </ligand>
</feature>
<feature type="binding site" evidence="1">
    <location>
        <position position="324"/>
    </location>
    <ligand>
        <name>NAD(+)</name>
        <dbReference type="ChEBI" id="CHEBI:57540"/>
    </ligand>
</feature>
<feature type="binding site" evidence="1">
    <location>
        <position position="343"/>
    </location>
    <ligand>
        <name>NAD(+)</name>
        <dbReference type="ChEBI" id="CHEBI:57540"/>
    </ligand>
</feature>
<feature type="binding site" evidence="1">
    <location>
        <begin position="400"/>
        <end position="402"/>
    </location>
    <ligand>
        <name>NAD(+)</name>
        <dbReference type="ChEBI" id="CHEBI:57540"/>
    </ligand>
</feature>
<feature type="binding site" evidence="1">
    <location>
        <position position="407"/>
    </location>
    <ligand>
        <name>NAD(+)</name>
        <dbReference type="ChEBI" id="CHEBI:57540"/>
    </ligand>
</feature>
<feature type="binding site" evidence="1">
    <location>
        <position position="429"/>
    </location>
    <ligand>
        <name>NAD(+)</name>
        <dbReference type="ChEBI" id="CHEBI:57540"/>
    </ligand>
</feature>
<feature type="binding site" evidence="1">
    <location>
        <position position="453"/>
    </location>
    <ligand>
        <name>NAD(+)</name>
        <dbReference type="ChEBI" id="CHEBI:57540"/>
    </ligand>
</feature>
<feature type="binding site" evidence="1">
    <location>
        <position position="500"/>
    </location>
    <ligand>
        <name>substrate</name>
    </ligand>
</feature>
<feature type="binding site" evidence="1">
    <location>
        <position position="660"/>
    </location>
    <ligand>
        <name>substrate</name>
    </ligand>
</feature>
<feature type="site" description="Important for catalytic activity" evidence="1">
    <location>
        <position position="119"/>
    </location>
</feature>
<feature type="site" description="Important for catalytic activity" evidence="1">
    <location>
        <position position="139"/>
    </location>
</feature>
<evidence type="ECO:0000255" key="1">
    <source>
        <dbReference type="HAMAP-Rule" id="MF_01621"/>
    </source>
</evidence>
<evidence type="ECO:0000256" key="2">
    <source>
        <dbReference type="SAM" id="MobiDB-lite"/>
    </source>
</evidence>
<comment type="function">
    <text evidence="1">Involved in the aerobic and anaerobic degradation of long-chain fatty acids via beta-oxidation cycle. Catalyzes the formation of 3-oxoacyl-CoA from enoyl-CoA via L-3-hydroxyacyl-CoA. It can also use D-3-hydroxyacyl-CoA and cis-3-enoyl-CoA as substrate.</text>
</comment>
<comment type="catalytic activity">
    <reaction evidence="1">
        <text>a (3S)-3-hydroxyacyl-CoA + NAD(+) = a 3-oxoacyl-CoA + NADH + H(+)</text>
        <dbReference type="Rhea" id="RHEA:22432"/>
        <dbReference type="ChEBI" id="CHEBI:15378"/>
        <dbReference type="ChEBI" id="CHEBI:57318"/>
        <dbReference type="ChEBI" id="CHEBI:57540"/>
        <dbReference type="ChEBI" id="CHEBI:57945"/>
        <dbReference type="ChEBI" id="CHEBI:90726"/>
        <dbReference type="EC" id="1.1.1.35"/>
    </reaction>
</comment>
<comment type="catalytic activity">
    <reaction evidence="1">
        <text>a (3S)-3-hydroxyacyl-CoA = a (2E)-enoyl-CoA + H2O</text>
        <dbReference type="Rhea" id="RHEA:16105"/>
        <dbReference type="ChEBI" id="CHEBI:15377"/>
        <dbReference type="ChEBI" id="CHEBI:57318"/>
        <dbReference type="ChEBI" id="CHEBI:58856"/>
        <dbReference type="EC" id="4.2.1.17"/>
    </reaction>
</comment>
<comment type="catalytic activity">
    <reaction evidence="1">
        <text>a 4-saturated-(3S)-3-hydroxyacyl-CoA = a (3E)-enoyl-CoA + H2O</text>
        <dbReference type="Rhea" id="RHEA:20724"/>
        <dbReference type="ChEBI" id="CHEBI:15377"/>
        <dbReference type="ChEBI" id="CHEBI:58521"/>
        <dbReference type="ChEBI" id="CHEBI:137480"/>
        <dbReference type="EC" id="4.2.1.17"/>
    </reaction>
</comment>
<comment type="catalytic activity">
    <reaction evidence="1">
        <text>(3S)-3-hydroxybutanoyl-CoA = (3R)-3-hydroxybutanoyl-CoA</text>
        <dbReference type="Rhea" id="RHEA:21760"/>
        <dbReference type="ChEBI" id="CHEBI:57315"/>
        <dbReference type="ChEBI" id="CHEBI:57316"/>
        <dbReference type="EC" id="5.1.2.3"/>
    </reaction>
</comment>
<comment type="catalytic activity">
    <reaction evidence="1">
        <text>a (3Z)-enoyl-CoA = a 4-saturated (2E)-enoyl-CoA</text>
        <dbReference type="Rhea" id="RHEA:45900"/>
        <dbReference type="ChEBI" id="CHEBI:85097"/>
        <dbReference type="ChEBI" id="CHEBI:85489"/>
        <dbReference type="EC" id="5.3.3.8"/>
    </reaction>
</comment>
<comment type="catalytic activity">
    <reaction evidence="1">
        <text>a (3E)-enoyl-CoA = a 4-saturated (2E)-enoyl-CoA</text>
        <dbReference type="Rhea" id="RHEA:45228"/>
        <dbReference type="ChEBI" id="CHEBI:58521"/>
        <dbReference type="ChEBI" id="CHEBI:85097"/>
        <dbReference type="EC" id="5.3.3.8"/>
    </reaction>
</comment>
<comment type="pathway">
    <text evidence="1">Lipid metabolism; fatty acid beta-oxidation.</text>
</comment>
<comment type="subunit">
    <text evidence="1">Heterotetramer of two alpha chains (FadB) and two beta chains (FadA).</text>
</comment>
<comment type="similarity">
    <text evidence="1">In the N-terminal section; belongs to the enoyl-CoA hydratase/isomerase family.</text>
</comment>
<comment type="similarity">
    <text evidence="1">In the C-terminal section; belongs to the 3-hydroxyacyl-CoA dehydrogenase family.</text>
</comment>
<keyword id="KW-0276">Fatty acid metabolism</keyword>
<keyword id="KW-0413">Isomerase</keyword>
<keyword id="KW-0442">Lipid degradation</keyword>
<keyword id="KW-0443">Lipid metabolism</keyword>
<keyword id="KW-0456">Lyase</keyword>
<keyword id="KW-0511">Multifunctional enzyme</keyword>
<keyword id="KW-0520">NAD</keyword>
<keyword id="KW-0560">Oxidoreductase</keyword>
<keyword id="KW-1185">Reference proteome</keyword>
<protein>
    <recommendedName>
        <fullName evidence="1">Fatty acid oxidation complex subunit alpha</fullName>
    </recommendedName>
    <domain>
        <recommendedName>
            <fullName evidence="1">Enoyl-CoA hydratase/Delta(3)-cis-Delta(2)-trans-enoyl-CoA isomerase/3-hydroxybutyryl-CoA epimerase</fullName>
            <ecNumber evidence="1">4.2.1.17</ecNumber>
            <ecNumber evidence="1">5.1.2.3</ecNumber>
            <ecNumber evidence="1">5.3.3.8</ecNumber>
        </recommendedName>
    </domain>
    <domain>
        <recommendedName>
            <fullName evidence="1">3-hydroxyacyl-CoA dehydrogenase</fullName>
            <ecNumber evidence="1">1.1.1.35</ecNumber>
        </recommendedName>
    </domain>
</protein>
<dbReference type="EC" id="4.2.1.17" evidence="1"/>
<dbReference type="EC" id="5.1.2.3" evidence="1"/>
<dbReference type="EC" id="5.3.3.8" evidence="1"/>
<dbReference type="EC" id="1.1.1.35" evidence="1"/>
<dbReference type="EMBL" id="CP000783">
    <property type="protein sequence ID" value="ABU78911.1"/>
    <property type="molecule type" value="Genomic_DNA"/>
</dbReference>
<dbReference type="RefSeq" id="WP_012126024.1">
    <property type="nucleotide sequence ID" value="NC_009778.1"/>
</dbReference>
<dbReference type="SMR" id="A7MQP0"/>
<dbReference type="KEGG" id="esa:ESA_03714"/>
<dbReference type="PATRIC" id="fig|290339.8.peg.3301"/>
<dbReference type="HOGENOM" id="CLU_009834_16_3_6"/>
<dbReference type="UniPathway" id="UPA00659"/>
<dbReference type="Proteomes" id="UP000000260">
    <property type="component" value="Chromosome"/>
</dbReference>
<dbReference type="GO" id="GO:0036125">
    <property type="term" value="C:fatty acid beta-oxidation multienzyme complex"/>
    <property type="evidence" value="ECO:0007669"/>
    <property type="project" value="InterPro"/>
</dbReference>
<dbReference type="GO" id="GO:0008692">
    <property type="term" value="F:3-hydroxybutyryl-CoA epimerase activity"/>
    <property type="evidence" value="ECO:0007669"/>
    <property type="project" value="UniProtKB-UniRule"/>
</dbReference>
<dbReference type="GO" id="GO:0004165">
    <property type="term" value="F:delta(3)-delta(2)-enoyl-CoA isomerase activity"/>
    <property type="evidence" value="ECO:0007669"/>
    <property type="project" value="UniProtKB-UniRule"/>
</dbReference>
<dbReference type="GO" id="GO:0004300">
    <property type="term" value="F:enoyl-CoA hydratase activity"/>
    <property type="evidence" value="ECO:0007669"/>
    <property type="project" value="UniProtKB-UniRule"/>
</dbReference>
<dbReference type="GO" id="GO:0016509">
    <property type="term" value="F:long-chain-3-hydroxyacyl-CoA dehydrogenase activity"/>
    <property type="evidence" value="ECO:0007669"/>
    <property type="project" value="TreeGrafter"/>
</dbReference>
<dbReference type="GO" id="GO:0070403">
    <property type="term" value="F:NAD+ binding"/>
    <property type="evidence" value="ECO:0007669"/>
    <property type="project" value="InterPro"/>
</dbReference>
<dbReference type="GO" id="GO:0006635">
    <property type="term" value="P:fatty acid beta-oxidation"/>
    <property type="evidence" value="ECO:0007669"/>
    <property type="project" value="UniProtKB-UniRule"/>
</dbReference>
<dbReference type="CDD" id="cd06558">
    <property type="entry name" value="crotonase-like"/>
    <property type="match status" value="1"/>
</dbReference>
<dbReference type="FunFam" id="1.10.1040.50:FF:000001">
    <property type="entry name" value="Fatty acid oxidation complex subunit alpha"/>
    <property type="match status" value="1"/>
</dbReference>
<dbReference type="FunFam" id="3.90.226.10:FF:000018">
    <property type="entry name" value="Fatty acid oxidation complex subunit alpha"/>
    <property type="match status" value="1"/>
</dbReference>
<dbReference type="FunFam" id="3.40.50.720:FF:000009">
    <property type="entry name" value="Fatty oxidation complex, alpha subunit"/>
    <property type="match status" value="1"/>
</dbReference>
<dbReference type="Gene3D" id="1.10.1040.50">
    <property type="match status" value="1"/>
</dbReference>
<dbReference type="Gene3D" id="3.90.226.10">
    <property type="entry name" value="2-enoyl-CoA Hydratase, Chain A, domain 1"/>
    <property type="match status" value="1"/>
</dbReference>
<dbReference type="Gene3D" id="3.40.50.720">
    <property type="entry name" value="NAD(P)-binding Rossmann-like Domain"/>
    <property type="match status" value="1"/>
</dbReference>
<dbReference type="HAMAP" id="MF_01621">
    <property type="entry name" value="FadB"/>
    <property type="match status" value="1"/>
</dbReference>
<dbReference type="InterPro" id="IPR006180">
    <property type="entry name" value="3-OHacyl-CoA_DH_CS"/>
</dbReference>
<dbReference type="InterPro" id="IPR006176">
    <property type="entry name" value="3-OHacyl-CoA_DH_NAD-bd"/>
</dbReference>
<dbReference type="InterPro" id="IPR006108">
    <property type="entry name" value="3HC_DH_C"/>
</dbReference>
<dbReference type="InterPro" id="IPR008927">
    <property type="entry name" value="6-PGluconate_DH-like_C_sf"/>
</dbReference>
<dbReference type="InterPro" id="IPR029045">
    <property type="entry name" value="ClpP/crotonase-like_dom_sf"/>
</dbReference>
<dbReference type="InterPro" id="IPR001753">
    <property type="entry name" value="Enoyl-CoA_hydra/iso"/>
</dbReference>
<dbReference type="InterPro" id="IPR050136">
    <property type="entry name" value="FA_oxidation_alpha_subunit"/>
</dbReference>
<dbReference type="InterPro" id="IPR012799">
    <property type="entry name" value="FadB"/>
</dbReference>
<dbReference type="InterPro" id="IPR036291">
    <property type="entry name" value="NAD(P)-bd_dom_sf"/>
</dbReference>
<dbReference type="NCBIfam" id="TIGR02437">
    <property type="entry name" value="FadB"/>
    <property type="match status" value="1"/>
</dbReference>
<dbReference type="NCBIfam" id="NF008727">
    <property type="entry name" value="PRK11730.1"/>
    <property type="match status" value="1"/>
</dbReference>
<dbReference type="PANTHER" id="PTHR43612">
    <property type="entry name" value="TRIFUNCTIONAL ENZYME SUBUNIT ALPHA"/>
    <property type="match status" value="1"/>
</dbReference>
<dbReference type="PANTHER" id="PTHR43612:SF3">
    <property type="entry name" value="TRIFUNCTIONAL ENZYME SUBUNIT ALPHA, MITOCHONDRIAL"/>
    <property type="match status" value="1"/>
</dbReference>
<dbReference type="Pfam" id="PF00725">
    <property type="entry name" value="3HCDH"/>
    <property type="match status" value="2"/>
</dbReference>
<dbReference type="Pfam" id="PF02737">
    <property type="entry name" value="3HCDH_N"/>
    <property type="match status" value="1"/>
</dbReference>
<dbReference type="Pfam" id="PF00378">
    <property type="entry name" value="ECH_1"/>
    <property type="match status" value="1"/>
</dbReference>
<dbReference type="SUPFAM" id="SSF48179">
    <property type="entry name" value="6-phosphogluconate dehydrogenase C-terminal domain-like"/>
    <property type="match status" value="2"/>
</dbReference>
<dbReference type="SUPFAM" id="SSF52096">
    <property type="entry name" value="ClpP/crotonase"/>
    <property type="match status" value="1"/>
</dbReference>
<dbReference type="SUPFAM" id="SSF51735">
    <property type="entry name" value="NAD(P)-binding Rossmann-fold domains"/>
    <property type="match status" value="1"/>
</dbReference>
<dbReference type="PROSITE" id="PS00067">
    <property type="entry name" value="3HCDH"/>
    <property type="match status" value="1"/>
</dbReference>
<organism>
    <name type="scientific">Cronobacter sakazakii (strain ATCC BAA-894)</name>
    <name type="common">Enterobacter sakazakii</name>
    <dbReference type="NCBI Taxonomy" id="290339"/>
    <lineage>
        <taxon>Bacteria</taxon>
        <taxon>Pseudomonadati</taxon>
        <taxon>Pseudomonadota</taxon>
        <taxon>Gammaproteobacteria</taxon>
        <taxon>Enterobacterales</taxon>
        <taxon>Enterobacteriaceae</taxon>
        <taxon>Cronobacter</taxon>
    </lineage>
</organism>
<accession>A7MQP0</accession>
<reference key="1">
    <citation type="journal article" date="2010" name="PLoS ONE">
        <title>Genome sequence of Cronobacter sakazakii BAA-894 and comparative genomic hybridization analysis with other Cronobacter species.</title>
        <authorList>
            <person name="Kucerova E."/>
            <person name="Clifton S.W."/>
            <person name="Xia X.Q."/>
            <person name="Long F."/>
            <person name="Porwollik S."/>
            <person name="Fulton L."/>
            <person name="Fronick C."/>
            <person name="Minx P."/>
            <person name="Kyung K."/>
            <person name="Warren W."/>
            <person name="Fulton R."/>
            <person name="Feng D."/>
            <person name="Wollam A."/>
            <person name="Shah N."/>
            <person name="Bhonagiri V."/>
            <person name="Nash W.E."/>
            <person name="Hallsworth-Pepin K."/>
            <person name="Wilson R.K."/>
            <person name="McClelland M."/>
            <person name="Forsythe S.J."/>
        </authorList>
    </citation>
    <scope>NUCLEOTIDE SEQUENCE [LARGE SCALE GENOMIC DNA]</scope>
    <source>
        <strain>ATCC BAA-894</strain>
    </source>
</reference>
<proteinExistence type="inferred from homology"/>
<gene>
    <name evidence="1" type="primary">fadB</name>
    <name type="ordered locus">ESA_03714</name>
</gene>